<name>G6PI_ECOLC</name>
<dbReference type="EC" id="5.3.1.9" evidence="1"/>
<dbReference type="EMBL" id="CP000946">
    <property type="protein sequence ID" value="ACA79604.1"/>
    <property type="molecule type" value="Genomic_DNA"/>
</dbReference>
<dbReference type="RefSeq" id="WP_000789986.1">
    <property type="nucleotide sequence ID" value="NZ_MTFT01000033.1"/>
</dbReference>
<dbReference type="SMR" id="B1IUM7"/>
<dbReference type="GeneID" id="93777863"/>
<dbReference type="KEGG" id="ecl:EcolC_4005"/>
<dbReference type="HOGENOM" id="CLU_017947_3_1_6"/>
<dbReference type="UniPathway" id="UPA00109">
    <property type="reaction ID" value="UER00181"/>
</dbReference>
<dbReference type="UniPathway" id="UPA00138"/>
<dbReference type="GO" id="GO:0005829">
    <property type="term" value="C:cytosol"/>
    <property type="evidence" value="ECO:0007669"/>
    <property type="project" value="TreeGrafter"/>
</dbReference>
<dbReference type="GO" id="GO:0097367">
    <property type="term" value="F:carbohydrate derivative binding"/>
    <property type="evidence" value="ECO:0007669"/>
    <property type="project" value="InterPro"/>
</dbReference>
<dbReference type="GO" id="GO:0004347">
    <property type="term" value="F:glucose-6-phosphate isomerase activity"/>
    <property type="evidence" value="ECO:0007669"/>
    <property type="project" value="UniProtKB-UniRule"/>
</dbReference>
<dbReference type="GO" id="GO:0048029">
    <property type="term" value="F:monosaccharide binding"/>
    <property type="evidence" value="ECO:0007669"/>
    <property type="project" value="TreeGrafter"/>
</dbReference>
<dbReference type="GO" id="GO:0006094">
    <property type="term" value="P:gluconeogenesis"/>
    <property type="evidence" value="ECO:0007669"/>
    <property type="project" value="UniProtKB-UniRule"/>
</dbReference>
<dbReference type="GO" id="GO:0051156">
    <property type="term" value="P:glucose 6-phosphate metabolic process"/>
    <property type="evidence" value="ECO:0007669"/>
    <property type="project" value="TreeGrafter"/>
</dbReference>
<dbReference type="GO" id="GO:0006096">
    <property type="term" value="P:glycolytic process"/>
    <property type="evidence" value="ECO:0007669"/>
    <property type="project" value="UniProtKB-UniRule"/>
</dbReference>
<dbReference type="CDD" id="cd05015">
    <property type="entry name" value="SIS_PGI_1"/>
    <property type="match status" value="1"/>
</dbReference>
<dbReference type="CDD" id="cd05016">
    <property type="entry name" value="SIS_PGI_2"/>
    <property type="match status" value="1"/>
</dbReference>
<dbReference type="FunFam" id="1.10.1390.10:FF:000001">
    <property type="entry name" value="Glucose-6-phosphate isomerase"/>
    <property type="match status" value="1"/>
</dbReference>
<dbReference type="FunFam" id="3.40.50.10490:FF:000004">
    <property type="entry name" value="Glucose-6-phosphate isomerase"/>
    <property type="match status" value="1"/>
</dbReference>
<dbReference type="Gene3D" id="1.10.1390.10">
    <property type="match status" value="1"/>
</dbReference>
<dbReference type="Gene3D" id="3.40.50.10490">
    <property type="entry name" value="Glucose-6-phosphate isomerase like protein, domain 1"/>
    <property type="match status" value="2"/>
</dbReference>
<dbReference type="HAMAP" id="MF_00473">
    <property type="entry name" value="G6P_isomerase"/>
    <property type="match status" value="1"/>
</dbReference>
<dbReference type="InterPro" id="IPR001672">
    <property type="entry name" value="G6P_Isomerase"/>
</dbReference>
<dbReference type="InterPro" id="IPR023096">
    <property type="entry name" value="G6P_Isomerase_C"/>
</dbReference>
<dbReference type="InterPro" id="IPR018189">
    <property type="entry name" value="Phosphoglucose_isomerase_CS"/>
</dbReference>
<dbReference type="InterPro" id="IPR046348">
    <property type="entry name" value="SIS_dom_sf"/>
</dbReference>
<dbReference type="InterPro" id="IPR035476">
    <property type="entry name" value="SIS_PGI_1"/>
</dbReference>
<dbReference type="InterPro" id="IPR035482">
    <property type="entry name" value="SIS_PGI_2"/>
</dbReference>
<dbReference type="NCBIfam" id="NF001211">
    <property type="entry name" value="PRK00179.1"/>
    <property type="match status" value="1"/>
</dbReference>
<dbReference type="PANTHER" id="PTHR11469">
    <property type="entry name" value="GLUCOSE-6-PHOSPHATE ISOMERASE"/>
    <property type="match status" value="1"/>
</dbReference>
<dbReference type="PANTHER" id="PTHR11469:SF1">
    <property type="entry name" value="GLUCOSE-6-PHOSPHATE ISOMERASE"/>
    <property type="match status" value="1"/>
</dbReference>
<dbReference type="Pfam" id="PF00342">
    <property type="entry name" value="PGI"/>
    <property type="match status" value="1"/>
</dbReference>
<dbReference type="PRINTS" id="PR00662">
    <property type="entry name" value="G6PISOMERASE"/>
</dbReference>
<dbReference type="SUPFAM" id="SSF53697">
    <property type="entry name" value="SIS domain"/>
    <property type="match status" value="1"/>
</dbReference>
<dbReference type="PROSITE" id="PS00765">
    <property type="entry name" value="P_GLUCOSE_ISOMERASE_1"/>
    <property type="match status" value="1"/>
</dbReference>
<dbReference type="PROSITE" id="PS00174">
    <property type="entry name" value="P_GLUCOSE_ISOMERASE_2"/>
    <property type="match status" value="1"/>
</dbReference>
<dbReference type="PROSITE" id="PS51463">
    <property type="entry name" value="P_GLUCOSE_ISOMERASE_3"/>
    <property type="match status" value="1"/>
</dbReference>
<keyword id="KW-0007">Acetylation</keyword>
<keyword id="KW-0963">Cytoplasm</keyword>
<keyword id="KW-0312">Gluconeogenesis</keyword>
<keyword id="KW-0324">Glycolysis</keyword>
<keyword id="KW-0413">Isomerase</keyword>
<reference key="1">
    <citation type="submission" date="2008-02" db="EMBL/GenBank/DDBJ databases">
        <title>Complete sequence of Escherichia coli C str. ATCC 8739.</title>
        <authorList>
            <person name="Copeland A."/>
            <person name="Lucas S."/>
            <person name="Lapidus A."/>
            <person name="Glavina del Rio T."/>
            <person name="Dalin E."/>
            <person name="Tice H."/>
            <person name="Bruce D."/>
            <person name="Goodwin L."/>
            <person name="Pitluck S."/>
            <person name="Kiss H."/>
            <person name="Brettin T."/>
            <person name="Detter J.C."/>
            <person name="Han C."/>
            <person name="Kuske C.R."/>
            <person name="Schmutz J."/>
            <person name="Larimer F."/>
            <person name="Land M."/>
            <person name="Hauser L."/>
            <person name="Kyrpides N."/>
            <person name="Mikhailova N."/>
            <person name="Ingram L."/>
            <person name="Richardson P."/>
        </authorList>
    </citation>
    <scope>NUCLEOTIDE SEQUENCE [LARGE SCALE GENOMIC DNA]</scope>
    <source>
        <strain>ATCC 8739 / DSM 1576 / NBRC 3972 / NCIMB 8545 / WDCM 00012 / Crooks</strain>
    </source>
</reference>
<protein>
    <recommendedName>
        <fullName evidence="1">Glucose-6-phosphate isomerase</fullName>
        <shortName evidence="1">GPI</shortName>
        <ecNumber evidence="1">5.3.1.9</ecNumber>
    </recommendedName>
    <alternativeName>
        <fullName evidence="1">Phosphoglucose isomerase</fullName>
        <shortName evidence="1">PGI</shortName>
    </alternativeName>
    <alternativeName>
        <fullName evidence="1">Phosphohexose isomerase</fullName>
        <shortName evidence="1">PHI</shortName>
    </alternativeName>
</protein>
<gene>
    <name evidence="1" type="primary">pgi</name>
    <name type="ordered locus">EcolC_4005</name>
</gene>
<feature type="chain" id="PRO_1000081238" description="Glucose-6-phosphate isomerase">
    <location>
        <begin position="1"/>
        <end position="549"/>
    </location>
</feature>
<feature type="active site" description="Proton donor" evidence="1">
    <location>
        <position position="355"/>
    </location>
</feature>
<feature type="active site" evidence="1">
    <location>
        <position position="386"/>
    </location>
</feature>
<feature type="active site" evidence="1">
    <location>
        <position position="514"/>
    </location>
</feature>
<feature type="modified residue" description="N6-acetyllysine" evidence="1">
    <location>
        <position position="80"/>
    </location>
</feature>
<feature type="modified residue" description="N6-acetyllysine" evidence="1">
    <location>
        <position position="228"/>
    </location>
</feature>
<feature type="modified residue" description="N6-acetyllysine" evidence="1">
    <location>
        <position position="234"/>
    </location>
</feature>
<sequence length="549" mass="61530">MKNINPTQTAAWQALQKHFDEMKDVTIADLFAKDGDRFSKFSATFDDQMLVDYSKNRITEETLAKLQDLAKECDLAGAIKSMFSGEKINRTENRAVLHVALRNRSNTPILVDGKDVMPEVNAVLEKMKTFSEAIISGEWKGYTGKAITDVVNIGIGGSDLGPYMVTEALRPYKNHLNMHFVSNVDGTHIAEVLKKVNPETTLFLVASKTFTTQETMTNAHSARDWFLKAAGDEKHVAKHFAALSTNAKAVGEFGIDTANMFEFWDWVGGRYSLWSAIGLSIVLSIGFDNFVELLSGAHAMDKHFSTTPAEKNLPVLLALIGIWYNNFFGAETEAILPYDQYMHRFAAYFQQGNMESNGKYVDRNGNVVDYQTGPIIWGEPGTNGQHAFYQLIHQGTKMVPCDFIAPAITHNPLSDHHQKLLSNFFAQTEALAFGKSREVVEQEYRDQGKDPATLDYVVPFKVFEGNRPTNSILLREITPFSLGALIALYEHKIFTQGVILNIFTFDQWGVELGKQLANRILPELKDDKEISSHDSSTNGLINRYKAWRG</sequence>
<comment type="function">
    <text evidence="1">Catalyzes the reversible isomerization of glucose-6-phosphate to fructose-6-phosphate.</text>
</comment>
<comment type="catalytic activity">
    <reaction evidence="1">
        <text>alpha-D-glucose 6-phosphate = beta-D-fructose 6-phosphate</text>
        <dbReference type="Rhea" id="RHEA:11816"/>
        <dbReference type="ChEBI" id="CHEBI:57634"/>
        <dbReference type="ChEBI" id="CHEBI:58225"/>
        <dbReference type="EC" id="5.3.1.9"/>
    </reaction>
</comment>
<comment type="pathway">
    <text evidence="1">Carbohydrate biosynthesis; gluconeogenesis.</text>
</comment>
<comment type="pathway">
    <text evidence="1">Carbohydrate degradation; glycolysis; D-glyceraldehyde 3-phosphate and glycerone phosphate from D-glucose: step 2/4.</text>
</comment>
<comment type="subcellular location">
    <subcellularLocation>
        <location evidence="1">Cytoplasm</location>
    </subcellularLocation>
</comment>
<comment type="similarity">
    <text evidence="1">Belongs to the GPI family.</text>
</comment>
<organism>
    <name type="scientific">Escherichia coli (strain ATCC 8739 / DSM 1576 / NBRC 3972 / NCIMB 8545 / WDCM 00012 / Crooks)</name>
    <dbReference type="NCBI Taxonomy" id="481805"/>
    <lineage>
        <taxon>Bacteria</taxon>
        <taxon>Pseudomonadati</taxon>
        <taxon>Pseudomonadota</taxon>
        <taxon>Gammaproteobacteria</taxon>
        <taxon>Enterobacterales</taxon>
        <taxon>Enterobacteriaceae</taxon>
        <taxon>Escherichia</taxon>
    </lineage>
</organism>
<evidence type="ECO:0000255" key="1">
    <source>
        <dbReference type="HAMAP-Rule" id="MF_00473"/>
    </source>
</evidence>
<proteinExistence type="inferred from homology"/>
<accession>B1IUM7</accession>